<evidence type="ECO:0000250" key="1"/>
<evidence type="ECO:0000255" key="2">
    <source>
        <dbReference type="PROSITE-ProRule" id="PRU00147"/>
    </source>
</evidence>
<evidence type="ECO:0000256" key="3">
    <source>
        <dbReference type="SAM" id="MobiDB-lite"/>
    </source>
</evidence>
<evidence type="ECO:0000305" key="4"/>
<name>SNX8_BOVIN</name>
<proteinExistence type="evidence at transcript level"/>
<accession>Q2KHV6</accession>
<organism>
    <name type="scientific">Bos taurus</name>
    <name type="common">Bovine</name>
    <dbReference type="NCBI Taxonomy" id="9913"/>
    <lineage>
        <taxon>Eukaryota</taxon>
        <taxon>Metazoa</taxon>
        <taxon>Chordata</taxon>
        <taxon>Craniata</taxon>
        <taxon>Vertebrata</taxon>
        <taxon>Euteleostomi</taxon>
        <taxon>Mammalia</taxon>
        <taxon>Eutheria</taxon>
        <taxon>Laurasiatheria</taxon>
        <taxon>Artiodactyla</taxon>
        <taxon>Ruminantia</taxon>
        <taxon>Pecora</taxon>
        <taxon>Bovidae</taxon>
        <taxon>Bovinae</taxon>
        <taxon>Bos</taxon>
    </lineage>
</organism>
<keyword id="KW-0967">Endosome</keyword>
<keyword id="KW-0446">Lipid-binding</keyword>
<keyword id="KW-0472">Membrane</keyword>
<keyword id="KW-0653">Protein transport</keyword>
<keyword id="KW-1185">Reference proteome</keyword>
<keyword id="KW-0813">Transport</keyword>
<protein>
    <recommendedName>
        <fullName>Sorting nexin-8</fullName>
    </recommendedName>
</protein>
<feature type="chain" id="PRO_0000290188" description="Sorting nexin-8">
    <location>
        <begin position="1"/>
        <end position="459"/>
    </location>
</feature>
<feature type="domain" description="PX" evidence="2">
    <location>
        <begin position="68"/>
        <end position="176"/>
    </location>
</feature>
<feature type="region of interest" description="Disordered" evidence="3">
    <location>
        <begin position="1"/>
        <end position="53"/>
    </location>
</feature>
<feature type="binding site" evidence="1">
    <location>
        <position position="104"/>
    </location>
    <ligand>
        <name>a 1,2-diacyl-sn-glycero-3-phospho-(1D-myo-inositol-3-phosphate)</name>
        <dbReference type="ChEBI" id="CHEBI:58088"/>
    </ligand>
</feature>
<feature type="binding site" evidence="1">
    <location>
        <position position="130"/>
    </location>
    <ligand>
        <name>a 1,2-diacyl-sn-glycero-3-phospho-(1D-myo-inositol-3-phosphate)</name>
        <dbReference type="ChEBI" id="CHEBI:58088"/>
    </ligand>
</feature>
<feature type="binding site" evidence="1">
    <location>
        <position position="143"/>
    </location>
    <ligand>
        <name>a 1,2-diacyl-sn-glycero-3-phospho-(1D-myo-inositol-3-phosphate)</name>
        <dbReference type="ChEBI" id="CHEBI:58088"/>
    </ligand>
</feature>
<gene>
    <name type="primary">SNX8</name>
</gene>
<comment type="function">
    <text evidence="1">May be involved in several stages of intracellular trafficking. May play a role in intracellular protein transport from early endosomes to the trans-Golgi network (By similarity).</text>
</comment>
<comment type="subcellular location">
    <subcellularLocation>
        <location evidence="1">Early endosome membrane</location>
        <topology evidence="1">Peripheral membrane protein</topology>
        <orientation evidence="1">Cytoplasmic side</orientation>
    </subcellularLocation>
    <text evidence="1">Colocalizes with retromer components.</text>
</comment>
<comment type="similarity">
    <text evidence="4">Belongs to the sorting nexin family.</text>
</comment>
<dbReference type="EMBL" id="BC112867">
    <property type="protein sequence ID" value="AAI12868.1"/>
    <property type="molecule type" value="mRNA"/>
</dbReference>
<dbReference type="RefSeq" id="NP_001039998.1">
    <property type="nucleotide sequence ID" value="NM_001046533.2"/>
</dbReference>
<dbReference type="SMR" id="Q2KHV6"/>
<dbReference type="FunCoup" id="Q2KHV6">
    <property type="interactions" value="688"/>
</dbReference>
<dbReference type="STRING" id="9913.ENSBTAP00000018213"/>
<dbReference type="PaxDb" id="9913-ENSBTAP00000018213"/>
<dbReference type="Ensembl" id="ENSBTAT00000018213.5">
    <property type="protein sequence ID" value="ENSBTAP00000018213.3"/>
    <property type="gene ID" value="ENSBTAG00000013708.5"/>
</dbReference>
<dbReference type="GeneID" id="614344"/>
<dbReference type="KEGG" id="bta:614344"/>
<dbReference type="CTD" id="29886"/>
<dbReference type="VEuPathDB" id="HostDB:ENSBTAG00000013708"/>
<dbReference type="VGNC" id="VGNC:35114">
    <property type="gene designation" value="SNX8"/>
</dbReference>
<dbReference type="eggNOG" id="KOG2273">
    <property type="taxonomic scope" value="Eukaryota"/>
</dbReference>
<dbReference type="GeneTree" id="ENSGT00460000041594"/>
<dbReference type="HOGENOM" id="CLU_042580_0_0_1"/>
<dbReference type="InParanoid" id="Q2KHV6"/>
<dbReference type="OMA" id="WEYAGAK"/>
<dbReference type="OrthoDB" id="10064318at2759"/>
<dbReference type="TreeFam" id="TF314082"/>
<dbReference type="Proteomes" id="UP000009136">
    <property type="component" value="Chromosome 25"/>
</dbReference>
<dbReference type="Bgee" id="ENSBTAG00000013708">
    <property type="expression patterns" value="Expressed in cortex of kidney and 105 other cell types or tissues"/>
</dbReference>
<dbReference type="GO" id="GO:0005829">
    <property type="term" value="C:cytosol"/>
    <property type="evidence" value="ECO:0007669"/>
    <property type="project" value="GOC"/>
</dbReference>
<dbReference type="GO" id="GO:0031901">
    <property type="term" value="C:early endosome membrane"/>
    <property type="evidence" value="ECO:0000250"/>
    <property type="project" value="UniProtKB"/>
</dbReference>
<dbReference type="GO" id="GO:0035091">
    <property type="term" value="F:phosphatidylinositol binding"/>
    <property type="evidence" value="ECO:0000250"/>
    <property type="project" value="UniProtKB"/>
</dbReference>
<dbReference type="GO" id="GO:0034498">
    <property type="term" value="P:early endosome to Golgi transport"/>
    <property type="evidence" value="ECO:0000250"/>
    <property type="project" value="UniProtKB"/>
</dbReference>
<dbReference type="GO" id="GO:0006886">
    <property type="term" value="P:intracellular protein transport"/>
    <property type="evidence" value="ECO:0000250"/>
    <property type="project" value="UniProtKB"/>
</dbReference>
<dbReference type="CDD" id="cd07597">
    <property type="entry name" value="BAR_SNX8"/>
    <property type="match status" value="1"/>
</dbReference>
<dbReference type="CDD" id="cd06866">
    <property type="entry name" value="PX_SNX8_Mvp1p_like"/>
    <property type="match status" value="1"/>
</dbReference>
<dbReference type="FunFam" id="1.20.1270.60:FF:000049">
    <property type="entry name" value="Sorting nexin 8"/>
    <property type="match status" value="1"/>
</dbReference>
<dbReference type="FunFam" id="3.30.1520.10:FF:000032">
    <property type="entry name" value="Sorting nexin 8"/>
    <property type="match status" value="1"/>
</dbReference>
<dbReference type="Gene3D" id="1.20.1270.60">
    <property type="entry name" value="Arfaptin homology (AH) domain/BAR domain"/>
    <property type="match status" value="1"/>
</dbReference>
<dbReference type="Gene3D" id="3.30.1520.10">
    <property type="entry name" value="Phox-like domain"/>
    <property type="match status" value="1"/>
</dbReference>
<dbReference type="InterPro" id="IPR027267">
    <property type="entry name" value="AH/BAR_dom_sf"/>
</dbReference>
<dbReference type="InterPro" id="IPR001683">
    <property type="entry name" value="PX_dom"/>
</dbReference>
<dbReference type="InterPro" id="IPR036871">
    <property type="entry name" value="PX_dom_sf"/>
</dbReference>
<dbReference type="InterPro" id="IPR028662">
    <property type="entry name" value="SNX8/Mvp1"/>
</dbReference>
<dbReference type="InterPro" id="IPR035704">
    <property type="entry name" value="SNX8/Mvp1_PX"/>
</dbReference>
<dbReference type="InterPro" id="IPR045734">
    <property type="entry name" value="Snx8_BAR_dom"/>
</dbReference>
<dbReference type="PANTHER" id="PTHR46571">
    <property type="entry name" value="SORTING NEXIN-8"/>
    <property type="match status" value="1"/>
</dbReference>
<dbReference type="PANTHER" id="PTHR46571:SF1">
    <property type="entry name" value="SORTING NEXIN-8"/>
    <property type="match status" value="1"/>
</dbReference>
<dbReference type="Pfam" id="PF00787">
    <property type="entry name" value="PX"/>
    <property type="match status" value="1"/>
</dbReference>
<dbReference type="Pfam" id="PF19566">
    <property type="entry name" value="Snx8_BAR_dom"/>
    <property type="match status" value="1"/>
</dbReference>
<dbReference type="SMART" id="SM00312">
    <property type="entry name" value="PX"/>
    <property type="match status" value="1"/>
</dbReference>
<dbReference type="SUPFAM" id="SSF64268">
    <property type="entry name" value="PX domain"/>
    <property type="match status" value="1"/>
</dbReference>
<dbReference type="PROSITE" id="PS50195">
    <property type="entry name" value="PX"/>
    <property type="match status" value="1"/>
</dbReference>
<reference key="1">
    <citation type="submission" date="2006-01" db="EMBL/GenBank/DDBJ databases">
        <authorList>
            <consortium name="NIH - Mammalian Gene Collection (MGC) project"/>
        </authorList>
    </citation>
    <scope>NUCLEOTIDE SEQUENCE [LARGE SCALE MRNA]</scope>
    <source>
        <strain>Hereford</strain>
        <tissue>Heart ventricle</tissue>
    </source>
</reference>
<sequence length="459" mass="51619">MTGGAMDPLPTAPGAAAAEAEVDEEADPPAADSPVPPVSEPRAPDAGQMQVPPGNPLLLSLTLQELLARDAVQVELVPEKKGLFLKHVEYEVSSQRFKSCVYRRYNDFVVFHETLLHKFPYRMVPALPPKRMLGADREFIEARRRALKRFINLVARHPPFSEDTILKLFLSFSGPDVQNKLKESAQCLGDEFMNCRLAARAKDFLPADIQTQFAMSRELIRNIYNSFHKLRDRAERMVSRAIDNAADLLIFGKELSALGSDTTPLPSWASLNSSTWGSLKQALKGLSVEFALLADKAAQQGKQEENDVVEKLNLFLDLLQSYKDLCERHEKGVLHKHQRALHKYSLMKRQMVSAAVQSREPESMEQLESRIVQQENVIQTMELRSHFSLYCLHQETQLVHVYLPLTSHILGAFVNSQIQGHKEMSKVWNDLQPKLRCLFVGPHGAPAPPRPPQDGLSAH</sequence>